<proteinExistence type="inferred from homology"/>
<dbReference type="EMBL" id="ACJE01000001">
    <property type="protein sequence ID" value="EHA28238.1"/>
    <property type="status" value="ALT_INIT"/>
    <property type="molecule type" value="Genomic_DNA"/>
</dbReference>
<dbReference type="STRING" id="380704.G3XMC5"/>
<dbReference type="HOGENOM" id="CLU_011017_3_1_1"/>
<dbReference type="OrthoDB" id="117852at5052"/>
<dbReference type="Proteomes" id="UP000009038">
    <property type="component" value="Unassembled WGS sequence"/>
</dbReference>
<dbReference type="GO" id="GO:0005634">
    <property type="term" value="C:nucleus"/>
    <property type="evidence" value="ECO:0007669"/>
    <property type="project" value="UniProtKB-SubCell"/>
</dbReference>
<dbReference type="GO" id="GO:0003677">
    <property type="term" value="F:DNA binding"/>
    <property type="evidence" value="ECO:0007669"/>
    <property type="project" value="UniProtKB-KW"/>
</dbReference>
<dbReference type="GO" id="GO:0000981">
    <property type="term" value="F:DNA-binding transcription factor activity, RNA polymerase II-specific"/>
    <property type="evidence" value="ECO:0007669"/>
    <property type="project" value="InterPro"/>
</dbReference>
<dbReference type="GO" id="GO:0008270">
    <property type="term" value="F:zinc ion binding"/>
    <property type="evidence" value="ECO:0007669"/>
    <property type="project" value="InterPro"/>
</dbReference>
<dbReference type="GO" id="GO:0006351">
    <property type="term" value="P:DNA-templated transcription"/>
    <property type="evidence" value="ECO:0007669"/>
    <property type="project" value="InterPro"/>
</dbReference>
<dbReference type="GO" id="GO:0009893">
    <property type="term" value="P:positive regulation of metabolic process"/>
    <property type="evidence" value="ECO:0007669"/>
    <property type="project" value="UniProtKB-ARBA"/>
</dbReference>
<dbReference type="CDD" id="cd12148">
    <property type="entry name" value="fungal_TF_MHR"/>
    <property type="match status" value="1"/>
</dbReference>
<dbReference type="CDD" id="cd00067">
    <property type="entry name" value="GAL4"/>
    <property type="match status" value="1"/>
</dbReference>
<dbReference type="Gene3D" id="4.10.240.10">
    <property type="entry name" value="Zn(2)-C6 fungal-type DNA-binding domain"/>
    <property type="match status" value="1"/>
</dbReference>
<dbReference type="InterPro" id="IPR050815">
    <property type="entry name" value="TF_fung"/>
</dbReference>
<dbReference type="InterPro" id="IPR007219">
    <property type="entry name" value="Transcription_factor_dom_fun"/>
</dbReference>
<dbReference type="InterPro" id="IPR036864">
    <property type="entry name" value="Zn2-C6_fun-type_DNA-bd_sf"/>
</dbReference>
<dbReference type="InterPro" id="IPR001138">
    <property type="entry name" value="Zn2Cys6_DnaBD"/>
</dbReference>
<dbReference type="PANTHER" id="PTHR47338:SF3">
    <property type="entry name" value="C6 FINGER DOMAIN TRANSCRIPTION FACTOR DBAA-RELATED"/>
    <property type="match status" value="1"/>
</dbReference>
<dbReference type="PANTHER" id="PTHR47338">
    <property type="entry name" value="ZN(II)2CYS6 TRANSCRIPTION FACTOR (EUROFUNG)-RELATED"/>
    <property type="match status" value="1"/>
</dbReference>
<dbReference type="Pfam" id="PF04082">
    <property type="entry name" value="Fungal_trans"/>
    <property type="match status" value="1"/>
</dbReference>
<dbReference type="Pfam" id="PF00172">
    <property type="entry name" value="Zn_clus"/>
    <property type="match status" value="1"/>
</dbReference>
<dbReference type="SMART" id="SM00066">
    <property type="entry name" value="GAL4"/>
    <property type="match status" value="1"/>
</dbReference>
<dbReference type="SUPFAM" id="SSF57701">
    <property type="entry name" value="Zn2/Cys6 DNA-binding domain"/>
    <property type="match status" value="1"/>
</dbReference>
<dbReference type="PROSITE" id="PS00463">
    <property type="entry name" value="ZN2_CY6_FUNGAL_1"/>
    <property type="match status" value="1"/>
</dbReference>
<dbReference type="PROSITE" id="PS50048">
    <property type="entry name" value="ZN2_CY6_FUNGAL_2"/>
    <property type="match status" value="1"/>
</dbReference>
<protein>
    <recommendedName>
        <fullName evidence="5">Azaphilone cluster-specific transcription factor azaR</fullName>
    </recommendedName>
    <alternativeName>
        <fullName evidence="4">Azaphilone biosynthesis cluster protein azaR</fullName>
    </alternativeName>
</protein>
<comment type="function">
    <text evidence="3">Transcription factor that regulates the expression of the gene cluster that mediates the biosynthesis of azaphilones, a class of fungal metabolites characterized by a highly oxygenated pyrano-quinone bicyclic core and exhibiting a broad range of bioactivities (PubMed:22921072).</text>
</comment>
<comment type="subcellular location">
    <subcellularLocation>
        <location evidence="1">Nucleus</location>
    </subcellularLocation>
</comment>
<comment type="sequence caution" evidence="5">
    <conflict type="erroneous initiation">
        <sequence resource="EMBL-CDS" id="EHA28238"/>
    </conflict>
    <text>Truncated N-terminus.</text>
</comment>
<keyword id="KW-0238">DNA-binding</keyword>
<keyword id="KW-0479">Metal-binding</keyword>
<keyword id="KW-0539">Nucleus</keyword>
<keyword id="KW-0804">Transcription</keyword>
<keyword id="KW-0805">Transcription regulation</keyword>
<keyword id="KW-0862">Zinc</keyword>
<sequence>MSDSRTTTTKNNTTNHKTSRQGPGSACEECRRRKLRCDRQPQCQNCVDAGVYCVTNLARPARGPKKGHLKALKGRIATLERCLLEQRDGMLVDPISDDELLDKALSASSPASQSPDPSEEVSENILEDLDQVFFERVQPMVPILQRHRYFSWAREPQQSANRRGLQQAIRTLAAGVSSQLPEVRVALYRTTRHTLESLESDDTLLTAPDFEQVQAWILIAIYEFMQVSYSRGWMSAGRVFRLVQLLRLPEIDASPLSLLDLDLDPDSKWVVAEEKRRTVWMAYIMDCSLNLRHKGSLTLTEQALTRLPMPESEFQCGHPISMGFLAEALAGTDITSPLSSFAKCILLATISGRTLSHRHLSMAELLRGNPLQDVWTRHQWIDTTLTAHLQLSFSLPTAAESSDPMLLFAKMIGQAGVLSLYDILQSTPWEPETVSLLPDYEACALQAARETVVLARNLRHFSCFK</sequence>
<feature type="chain" id="PRO_0000437607" description="Azaphilone cluster-specific transcription factor azaR">
    <location>
        <begin position="1"/>
        <end position="465"/>
    </location>
</feature>
<feature type="DNA-binding region" description="Zn(2)-C6 fungal-type" evidence="1">
    <location>
        <begin position="27"/>
        <end position="53"/>
    </location>
</feature>
<feature type="region of interest" description="Disordered" evidence="2">
    <location>
        <begin position="1"/>
        <end position="25"/>
    </location>
</feature>
<feature type="compositionally biased region" description="Low complexity" evidence="2">
    <location>
        <begin position="1"/>
        <end position="16"/>
    </location>
</feature>
<accession>G3XMC5</accession>
<gene>
    <name evidence="4" type="primary">azaR</name>
    <name type="ORF">ASPNIDRAFT_132962</name>
</gene>
<name>AZAR_ASPNA</name>
<organism>
    <name type="scientific">Aspergillus niger (strain ATCC 1015 / CBS 113.46 / FGSC A1144 / LSHB Ac4 / NCTC 3858a / NRRL 328 / USDA 3528.7)</name>
    <dbReference type="NCBI Taxonomy" id="380704"/>
    <lineage>
        <taxon>Eukaryota</taxon>
        <taxon>Fungi</taxon>
        <taxon>Dikarya</taxon>
        <taxon>Ascomycota</taxon>
        <taxon>Pezizomycotina</taxon>
        <taxon>Eurotiomycetes</taxon>
        <taxon>Eurotiomycetidae</taxon>
        <taxon>Eurotiales</taxon>
        <taxon>Aspergillaceae</taxon>
        <taxon>Aspergillus</taxon>
        <taxon>Aspergillus subgen. Circumdati</taxon>
    </lineage>
</organism>
<evidence type="ECO:0000255" key="1">
    <source>
        <dbReference type="PROSITE-ProRule" id="PRU00227"/>
    </source>
</evidence>
<evidence type="ECO:0000256" key="2">
    <source>
        <dbReference type="SAM" id="MobiDB-lite"/>
    </source>
</evidence>
<evidence type="ECO:0000269" key="3">
    <source>
    </source>
</evidence>
<evidence type="ECO:0000303" key="4">
    <source>
    </source>
</evidence>
<evidence type="ECO:0000305" key="5"/>
<reference key="1">
    <citation type="journal article" date="2011" name="Genome Res.">
        <title>Comparative genomics of citric-acid-producing Aspergillus niger ATCC 1015 versus enzyme-producing CBS 513.88.</title>
        <authorList>
            <person name="Andersen M.R."/>
            <person name="Salazar M.P."/>
            <person name="Schaap P.J."/>
            <person name="van de Vondervoort P.J.I."/>
            <person name="Culley D."/>
            <person name="Thykaer J."/>
            <person name="Frisvad J.C."/>
            <person name="Nielsen K.F."/>
            <person name="Albang R."/>
            <person name="Albermann K."/>
            <person name="Berka R.M."/>
            <person name="Braus G.H."/>
            <person name="Braus-Stromeyer S.A."/>
            <person name="Corrochano L.M."/>
            <person name="Dai Z."/>
            <person name="van Dijck P.W.M."/>
            <person name="Hofmann G."/>
            <person name="Lasure L.L."/>
            <person name="Magnuson J.K."/>
            <person name="Menke H."/>
            <person name="Meijer M."/>
            <person name="Meijer S.L."/>
            <person name="Nielsen J.B."/>
            <person name="Nielsen M.L."/>
            <person name="van Ooyen A.J.J."/>
            <person name="Pel H.J."/>
            <person name="Poulsen L."/>
            <person name="Samson R.A."/>
            <person name="Stam H."/>
            <person name="Tsang A."/>
            <person name="van den Brink J.M."/>
            <person name="Atkins A."/>
            <person name="Aerts A."/>
            <person name="Shapiro H."/>
            <person name="Pangilinan J."/>
            <person name="Salamov A."/>
            <person name="Lou Y."/>
            <person name="Lindquist E."/>
            <person name="Lucas S."/>
            <person name="Grimwood J."/>
            <person name="Grigoriev I.V."/>
            <person name="Kubicek C.P."/>
            <person name="Martinez D."/>
            <person name="van Peij N.N.M.E."/>
            <person name="Roubos J.A."/>
            <person name="Nielsen J."/>
            <person name="Baker S.E."/>
        </authorList>
    </citation>
    <scope>NUCLEOTIDE SEQUENCE [LARGE SCALE GENOMIC DNA]</scope>
    <source>
        <strain>ATCC 1015 / CBS 113.46 / FGSC A1144 / LSHB Ac4 / NCTC 3858a / NRRL 328 / USDA 3528.7</strain>
    </source>
</reference>
<reference key="2">
    <citation type="journal article" date="2012" name="Chem. Biol.">
        <title>Characterization of a silent azaphilone gene cluster from Aspergillus niger ATCC 1015 reveals a hydroxylation-mediated pyran-ring formation.</title>
        <authorList>
            <person name="Zabala A.O."/>
            <person name="Xu W."/>
            <person name="Chooi Y.H."/>
            <person name="Tang Y."/>
        </authorList>
    </citation>
    <scope>FUNCTION</scope>
</reference>